<name>RPOA_BACSU</name>
<dbReference type="EC" id="2.7.7.6" evidence="1 2"/>
<dbReference type="EMBL" id="M26414">
    <property type="protein sequence ID" value="AAA22217.1"/>
    <property type="molecule type" value="Genomic_DNA"/>
</dbReference>
<dbReference type="EMBL" id="L47971">
    <property type="protein sequence ID" value="AAB06826.1"/>
    <property type="molecule type" value="Genomic_DNA"/>
</dbReference>
<dbReference type="EMBL" id="AL009126">
    <property type="protein sequence ID" value="CAB11919.1"/>
    <property type="molecule type" value="Genomic_DNA"/>
</dbReference>
<dbReference type="EMBL" id="M13957">
    <property type="protein sequence ID" value="AAA22708.1"/>
    <property type="molecule type" value="Genomic_DNA"/>
</dbReference>
<dbReference type="PIR" id="E32307">
    <property type="entry name" value="E32307"/>
</dbReference>
<dbReference type="RefSeq" id="NP_388024.1">
    <property type="nucleotide sequence ID" value="NC_000964.3"/>
</dbReference>
<dbReference type="RefSeq" id="WP_003225835.1">
    <property type="nucleotide sequence ID" value="NZ_OZ025638.1"/>
</dbReference>
<dbReference type="PDB" id="1Z3E">
    <property type="method" value="X-ray"/>
    <property type="resolution" value="1.50 A"/>
    <property type="chains" value="B=245-314"/>
</dbReference>
<dbReference type="PDB" id="3GFK">
    <property type="method" value="X-ray"/>
    <property type="resolution" value="2.30 A"/>
    <property type="chains" value="B=240-314"/>
</dbReference>
<dbReference type="PDB" id="3IHQ">
    <property type="method" value="X-ray"/>
    <property type="resolution" value="1.90 A"/>
    <property type="chains" value="B=245-314"/>
</dbReference>
<dbReference type="PDB" id="6WVJ">
    <property type="method" value="EM"/>
    <property type="resolution" value="3.36 A"/>
    <property type="chains" value="A/B=1-314"/>
</dbReference>
<dbReference type="PDB" id="6WVK">
    <property type="method" value="EM"/>
    <property type="resolution" value="3.36 A"/>
    <property type="chains" value="A/B=1-314"/>
</dbReference>
<dbReference type="PDB" id="6ZCA">
    <property type="method" value="EM"/>
    <property type="resolution" value="4.20 A"/>
    <property type="chains" value="U/V=1-314"/>
</dbReference>
<dbReference type="PDB" id="6ZFB">
    <property type="method" value="EM"/>
    <property type="resolution" value="3.90 A"/>
    <property type="chains" value="U/V/u/v=1-314"/>
</dbReference>
<dbReference type="PDB" id="7CKQ">
    <property type="method" value="EM"/>
    <property type="resolution" value="4.40 A"/>
    <property type="chains" value="A/B=1-314"/>
</dbReference>
<dbReference type="PDB" id="7F75">
    <property type="method" value="EM"/>
    <property type="resolution" value="4.20 A"/>
    <property type="chains" value="A/B/I=1-314"/>
</dbReference>
<dbReference type="PDB" id="8XA6">
    <property type="method" value="EM"/>
    <property type="resolution" value="3.02 A"/>
    <property type="chains" value="A/B=1-314"/>
</dbReference>
<dbReference type="PDB" id="8XA7">
    <property type="method" value="EM"/>
    <property type="resolution" value="2.94 A"/>
    <property type="chains" value="A/B=1-314"/>
</dbReference>
<dbReference type="PDB" id="8XA8">
    <property type="method" value="EM"/>
    <property type="resolution" value="3.19 A"/>
    <property type="chains" value="A/B=1-314"/>
</dbReference>
<dbReference type="PDBsum" id="1Z3E"/>
<dbReference type="PDBsum" id="3GFK"/>
<dbReference type="PDBsum" id="3IHQ"/>
<dbReference type="PDBsum" id="6WVJ"/>
<dbReference type="PDBsum" id="6WVK"/>
<dbReference type="PDBsum" id="6ZCA"/>
<dbReference type="PDBsum" id="6ZFB"/>
<dbReference type="PDBsum" id="7CKQ"/>
<dbReference type="PDBsum" id="7F75"/>
<dbReference type="PDBsum" id="8XA6"/>
<dbReference type="PDBsum" id="8XA7"/>
<dbReference type="PDBsum" id="8XA8"/>
<dbReference type="EMDB" id="EMD-21920"/>
<dbReference type="EMDB" id="EMD-21921"/>
<dbReference type="EMDB" id="EMD-30390"/>
<dbReference type="EMDB" id="EMD-31485"/>
<dbReference type="EMDB" id="EMD-38195"/>
<dbReference type="EMDB" id="EMD-38196"/>
<dbReference type="EMDB" id="EMD-38197"/>
<dbReference type="SMR" id="P20429"/>
<dbReference type="FunCoup" id="P20429">
    <property type="interactions" value="495"/>
</dbReference>
<dbReference type="IntAct" id="P20429">
    <property type="interactions" value="4"/>
</dbReference>
<dbReference type="MINT" id="P20429"/>
<dbReference type="STRING" id="224308.BSU01430"/>
<dbReference type="jPOST" id="P20429"/>
<dbReference type="PaxDb" id="224308-BSU01430"/>
<dbReference type="EnsemblBacteria" id="CAB11919">
    <property type="protein sequence ID" value="CAB11919"/>
    <property type="gene ID" value="BSU_01430"/>
</dbReference>
<dbReference type="GeneID" id="938921"/>
<dbReference type="KEGG" id="bsu:BSU01430"/>
<dbReference type="PATRIC" id="fig|224308.179.peg.147"/>
<dbReference type="eggNOG" id="COG0202">
    <property type="taxonomic scope" value="Bacteria"/>
</dbReference>
<dbReference type="InParanoid" id="P20429"/>
<dbReference type="OrthoDB" id="9805706at2"/>
<dbReference type="PhylomeDB" id="P20429"/>
<dbReference type="BioCyc" id="BSUB:BSU01430-MONOMER"/>
<dbReference type="EvolutionaryTrace" id="P20429"/>
<dbReference type="PRO" id="PR:P20429"/>
<dbReference type="Proteomes" id="UP000001570">
    <property type="component" value="Chromosome"/>
</dbReference>
<dbReference type="GO" id="GO:0005737">
    <property type="term" value="C:cytoplasm"/>
    <property type="evidence" value="ECO:0000318"/>
    <property type="project" value="GO_Central"/>
</dbReference>
<dbReference type="GO" id="GO:0000428">
    <property type="term" value="C:DNA-directed RNA polymerase complex"/>
    <property type="evidence" value="ECO:0007669"/>
    <property type="project" value="UniProtKB-KW"/>
</dbReference>
<dbReference type="GO" id="GO:0003677">
    <property type="term" value="F:DNA binding"/>
    <property type="evidence" value="ECO:0007669"/>
    <property type="project" value="UniProtKB-UniRule"/>
</dbReference>
<dbReference type="GO" id="GO:0003899">
    <property type="term" value="F:DNA-directed RNA polymerase activity"/>
    <property type="evidence" value="ECO:0007669"/>
    <property type="project" value="UniProtKB-UniRule"/>
</dbReference>
<dbReference type="GO" id="GO:0046983">
    <property type="term" value="F:protein dimerization activity"/>
    <property type="evidence" value="ECO:0007669"/>
    <property type="project" value="InterPro"/>
</dbReference>
<dbReference type="GO" id="GO:0006351">
    <property type="term" value="P:DNA-templated transcription"/>
    <property type="evidence" value="ECO:0007669"/>
    <property type="project" value="UniProtKB-UniRule"/>
</dbReference>
<dbReference type="CDD" id="cd06928">
    <property type="entry name" value="RNAP_alpha_NTD"/>
    <property type="match status" value="1"/>
</dbReference>
<dbReference type="FunFam" id="1.10.150.20:FF:000001">
    <property type="entry name" value="DNA-directed RNA polymerase subunit alpha"/>
    <property type="match status" value="1"/>
</dbReference>
<dbReference type="FunFam" id="2.170.120.12:FF:000001">
    <property type="entry name" value="DNA-directed RNA polymerase subunit alpha"/>
    <property type="match status" value="1"/>
</dbReference>
<dbReference type="Gene3D" id="1.10.150.20">
    <property type="entry name" value="5' to 3' exonuclease, C-terminal subdomain"/>
    <property type="match status" value="1"/>
</dbReference>
<dbReference type="Gene3D" id="2.170.120.12">
    <property type="entry name" value="DNA-directed RNA polymerase, insert domain"/>
    <property type="match status" value="1"/>
</dbReference>
<dbReference type="Gene3D" id="3.30.1360.10">
    <property type="entry name" value="RNA polymerase, RBP11-like subunit"/>
    <property type="match status" value="1"/>
</dbReference>
<dbReference type="HAMAP" id="MF_00059">
    <property type="entry name" value="RNApol_bact_RpoA"/>
    <property type="match status" value="1"/>
</dbReference>
<dbReference type="InterPro" id="IPR011262">
    <property type="entry name" value="DNA-dir_RNA_pol_insert"/>
</dbReference>
<dbReference type="InterPro" id="IPR011263">
    <property type="entry name" value="DNA-dir_RNA_pol_RpoA/D/Rpb3"/>
</dbReference>
<dbReference type="InterPro" id="IPR011773">
    <property type="entry name" value="DNA-dir_RpoA"/>
</dbReference>
<dbReference type="InterPro" id="IPR036603">
    <property type="entry name" value="RBP11-like"/>
</dbReference>
<dbReference type="InterPro" id="IPR011260">
    <property type="entry name" value="RNAP_asu_C"/>
</dbReference>
<dbReference type="InterPro" id="IPR036643">
    <property type="entry name" value="RNApol_insert_sf"/>
</dbReference>
<dbReference type="NCBIfam" id="NF003513">
    <property type="entry name" value="PRK05182.1-2"/>
    <property type="match status" value="1"/>
</dbReference>
<dbReference type="NCBIfam" id="NF003515">
    <property type="entry name" value="PRK05182.2-1"/>
    <property type="match status" value="1"/>
</dbReference>
<dbReference type="NCBIfam" id="NF003516">
    <property type="entry name" value="PRK05182.2-2"/>
    <property type="match status" value="1"/>
</dbReference>
<dbReference type="NCBIfam" id="NF003519">
    <property type="entry name" value="PRK05182.2-5"/>
    <property type="match status" value="1"/>
</dbReference>
<dbReference type="NCBIfam" id="TIGR02027">
    <property type="entry name" value="rpoA"/>
    <property type="match status" value="1"/>
</dbReference>
<dbReference type="Pfam" id="PF01000">
    <property type="entry name" value="RNA_pol_A_bac"/>
    <property type="match status" value="1"/>
</dbReference>
<dbReference type="Pfam" id="PF03118">
    <property type="entry name" value="RNA_pol_A_CTD"/>
    <property type="match status" value="1"/>
</dbReference>
<dbReference type="Pfam" id="PF01193">
    <property type="entry name" value="RNA_pol_L"/>
    <property type="match status" value="1"/>
</dbReference>
<dbReference type="SMART" id="SM00662">
    <property type="entry name" value="RPOLD"/>
    <property type="match status" value="1"/>
</dbReference>
<dbReference type="SUPFAM" id="SSF47789">
    <property type="entry name" value="C-terminal domain of RNA polymerase alpha subunit"/>
    <property type="match status" value="1"/>
</dbReference>
<dbReference type="SUPFAM" id="SSF56553">
    <property type="entry name" value="Insert subdomain of RNA polymerase alpha subunit"/>
    <property type="match status" value="1"/>
</dbReference>
<dbReference type="SUPFAM" id="SSF55257">
    <property type="entry name" value="RBP11-like subunits of RNA polymerase"/>
    <property type="match status" value="1"/>
</dbReference>
<gene>
    <name evidence="1" type="primary">rpoA</name>
    <name type="ordered locus">BSU01430</name>
</gene>
<protein>
    <recommendedName>
        <fullName evidence="1">DNA-directed RNA polymerase subunit alpha</fullName>
        <shortName evidence="1">RNAP subunit alpha</shortName>
        <ecNumber evidence="1 2">2.7.7.6</ecNumber>
    </recommendedName>
    <alternativeName>
        <fullName evidence="1">RNA polymerase subunit alpha</fullName>
    </alternativeName>
    <alternativeName>
        <fullName evidence="1">Transcriptase subunit alpha</fullName>
    </alternativeName>
</protein>
<organism>
    <name type="scientific">Bacillus subtilis (strain 168)</name>
    <dbReference type="NCBI Taxonomy" id="224308"/>
    <lineage>
        <taxon>Bacteria</taxon>
        <taxon>Bacillati</taxon>
        <taxon>Bacillota</taxon>
        <taxon>Bacilli</taxon>
        <taxon>Bacillales</taxon>
        <taxon>Bacillaceae</taxon>
        <taxon>Bacillus</taxon>
    </lineage>
</organism>
<keyword id="KW-0002">3D-structure</keyword>
<keyword id="KW-0240">DNA-directed RNA polymerase</keyword>
<keyword id="KW-0548">Nucleotidyltransferase</keyword>
<keyword id="KW-1185">Reference proteome</keyword>
<keyword id="KW-0804">Transcription</keyword>
<keyword id="KW-0808">Transferase</keyword>
<feature type="chain" id="PRO_0000175265" description="DNA-directed RNA polymerase subunit alpha">
    <location>
        <begin position="1"/>
        <end position="314"/>
    </location>
</feature>
<feature type="region of interest" description="Alpha N-terminal domain (alpha-NTD)" evidence="1">
    <location>
        <begin position="1"/>
        <end position="228"/>
    </location>
</feature>
<feature type="region of interest" description="Alpha C-terminal domain (alpha-CTD)" evidence="1">
    <location>
        <begin position="245"/>
        <end position="314"/>
    </location>
</feature>
<feature type="strand" evidence="6">
    <location>
        <begin position="8"/>
        <end position="14"/>
    </location>
</feature>
<feature type="strand" evidence="6">
    <location>
        <begin position="18"/>
        <end position="29"/>
    </location>
</feature>
<feature type="helix" evidence="6">
    <location>
        <begin position="32"/>
        <end position="47"/>
    </location>
</feature>
<feature type="strand" evidence="6">
    <location>
        <begin position="49"/>
        <end position="58"/>
    </location>
</feature>
<feature type="strand" evidence="6">
    <location>
        <begin position="63"/>
        <end position="65"/>
    </location>
</feature>
<feature type="strand" evidence="7">
    <location>
        <begin position="71"/>
        <end position="73"/>
    </location>
</feature>
<feature type="helix" evidence="6">
    <location>
        <begin position="75"/>
        <end position="83"/>
    </location>
</feature>
<feature type="strand" evidence="6">
    <location>
        <begin position="87"/>
        <end position="91"/>
    </location>
</feature>
<feature type="strand" evidence="6">
    <location>
        <begin position="95"/>
        <end position="108"/>
    </location>
</feature>
<feature type="helix" evidence="6">
    <location>
        <begin position="109"/>
        <end position="111"/>
    </location>
</feature>
<feature type="strand" evidence="6">
    <location>
        <begin position="118"/>
        <end position="121"/>
    </location>
</feature>
<feature type="strand" evidence="6">
    <location>
        <begin position="126"/>
        <end position="129"/>
    </location>
</feature>
<feature type="strand" evidence="6">
    <location>
        <begin position="135"/>
        <end position="149"/>
    </location>
</feature>
<feature type="helix" evidence="6">
    <location>
        <begin position="151"/>
        <end position="154"/>
    </location>
</feature>
<feature type="strand" evidence="6">
    <location>
        <begin position="163"/>
        <end position="165"/>
    </location>
</feature>
<feature type="strand" evidence="6">
    <location>
        <begin position="173"/>
        <end position="183"/>
    </location>
</feature>
<feature type="strand" evidence="6">
    <location>
        <begin position="185"/>
        <end position="187"/>
    </location>
</feature>
<feature type="strand" evidence="6">
    <location>
        <begin position="191"/>
        <end position="200"/>
    </location>
</feature>
<feature type="strand" evidence="6">
    <location>
        <begin position="202"/>
        <end position="204"/>
    </location>
</feature>
<feature type="helix" evidence="6">
    <location>
        <begin position="206"/>
        <end position="221"/>
    </location>
</feature>
<feature type="turn" evidence="6">
    <location>
        <begin position="222"/>
        <end position="226"/>
    </location>
</feature>
<feature type="helix" evidence="5">
    <location>
        <begin position="246"/>
        <end position="249"/>
    </location>
</feature>
<feature type="helix" evidence="5">
    <location>
        <begin position="253"/>
        <end position="255"/>
    </location>
</feature>
<feature type="helix" evidence="5">
    <location>
        <begin position="260"/>
        <end position="268"/>
    </location>
</feature>
<feature type="helix" evidence="5">
    <location>
        <begin position="274"/>
        <end position="278"/>
    </location>
</feature>
<feature type="helix" evidence="5">
    <location>
        <begin position="282"/>
        <end position="286"/>
    </location>
</feature>
<feature type="helix" evidence="5">
    <location>
        <begin position="293"/>
        <end position="305"/>
    </location>
</feature>
<evidence type="ECO:0000255" key="1">
    <source>
        <dbReference type="HAMAP-Rule" id="MF_00059"/>
    </source>
</evidence>
<evidence type="ECO:0000269" key="2">
    <source>
    </source>
</evidence>
<evidence type="ECO:0000269" key="3">
    <source>
    </source>
</evidence>
<evidence type="ECO:0000269" key="4">
    <source>
    </source>
</evidence>
<evidence type="ECO:0007829" key="5">
    <source>
        <dbReference type="PDB" id="1Z3E"/>
    </source>
</evidence>
<evidence type="ECO:0007829" key="6">
    <source>
        <dbReference type="PDB" id="8XA7"/>
    </source>
</evidence>
<evidence type="ECO:0007829" key="7">
    <source>
        <dbReference type="PDB" id="8XA8"/>
    </source>
</evidence>
<reference key="1">
    <citation type="journal article" date="1989" name="J. Bacteriol.">
        <title>Gene encoding the alpha core subunit of Bacillus subtilis RNA polymerase is cotranscribed with the genes for initiation factor 1 and ribosomal proteins B, S13, S11, and L17.</title>
        <authorList>
            <person name="Boylan S.A."/>
            <person name="Suh J.-W."/>
            <person name="Thomas S.M."/>
            <person name="Price C.W."/>
        </authorList>
    </citation>
    <scope>NUCLEOTIDE SEQUENCE [GENOMIC DNA]</scope>
</reference>
<reference key="2">
    <citation type="journal article" date="1996" name="Gene">
        <title>Genetic and transcriptional organization of the Bacillus subtilis spc-alpha region.</title>
        <authorList>
            <person name="Suh J.-W."/>
            <person name="Boylan S.A."/>
            <person name="Oh S.H."/>
            <person name="Price C.W."/>
        </authorList>
    </citation>
    <scope>NUCLEOTIDE SEQUENCE [GENOMIC DNA]</scope>
    <source>
        <strain>168 / Marburg / ATCC 6051 / DSM 10 / JCM 1465 / NBRC 13719 / NCIMB 3610 / NRRL NRS-744 / VKM B-501</strain>
    </source>
</reference>
<reference key="3">
    <citation type="journal article" date="1997" name="Nature">
        <title>The complete genome sequence of the Gram-positive bacterium Bacillus subtilis.</title>
        <authorList>
            <person name="Kunst F."/>
            <person name="Ogasawara N."/>
            <person name="Moszer I."/>
            <person name="Albertini A.M."/>
            <person name="Alloni G."/>
            <person name="Azevedo V."/>
            <person name="Bertero M.G."/>
            <person name="Bessieres P."/>
            <person name="Bolotin A."/>
            <person name="Borchert S."/>
            <person name="Borriss R."/>
            <person name="Boursier L."/>
            <person name="Brans A."/>
            <person name="Braun M."/>
            <person name="Brignell S.C."/>
            <person name="Bron S."/>
            <person name="Brouillet S."/>
            <person name="Bruschi C.V."/>
            <person name="Caldwell B."/>
            <person name="Capuano V."/>
            <person name="Carter N.M."/>
            <person name="Choi S.-K."/>
            <person name="Codani J.-J."/>
            <person name="Connerton I.F."/>
            <person name="Cummings N.J."/>
            <person name="Daniel R.A."/>
            <person name="Denizot F."/>
            <person name="Devine K.M."/>
            <person name="Duesterhoeft A."/>
            <person name="Ehrlich S.D."/>
            <person name="Emmerson P.T."/>
            <person name="Entian K.-D."/>
            <person name="Errington J."/>
            <person name="Fabret C."/>
            <person name="Ferrari E."/>
            <person name="Foulger D."/>
            <person name="Fritz C."/>
            <person name="Fujita M."/>
            <person name="Fujita Y."/>
            <person name="Fuma S."/>
            <person name="Galizzi A."/>
            <person name="Galleron N."/>
            <person name="Ghim S.-Y."/>
            <person name="Glaser P."/>
            <person name="Goffeau A."/>
            <person name="Golightly E.J."/>
            <person name="Grandi G."/>
            <person name="Guiseppi G."/>
            <person name="Guy B.J."/>
            <person name="Haga K."/>
            <person name="Haiech J."/>
            <person name="Harwood C.R."/>
            <person name="Henaut A."/>
            <person name="Hilbert H."/>
            <person name="Holsappel S."/>
            <person name="Hosono S."/>
            <person name="Hullo M.-F."/>
            <person name="Itaya M."/>
            <person name="Jones L.-M."/>
            <person name="Joris B."/>
            <person name="Karamata D."/>
            <person name="Kasahara Y."/>
            <person name="Klaerr-Blanchard M."/>
            <person name="Klein C."/>
            <person name="Kobayashi Y."/>
            <person name="Koetter P."/>
            <person name="Koningstein G."/>
            <person name="Krogh S."/>
            <person name="Kumano M."/>
            <person name="Kurita K."/>
            <person name="Lapidus A."/>
            <person name="Lardinois S."/>
            <person name="Lauber J."/>
            <person name="Lazarevic V."/>
            <person name="Lee S.-M."/>
            <person name="Levine A."/>
            <person name="Liu H."/>
            <person name="Masuda S."/>
            <person name="Mauel C."/>
            <person name="Medigue C."/>
            <person name="Medina N."/>
            <person name="Mellado R.P."/>
            <person name="Mizuno M."/>
            <person name="Moestl D."/>
            <person name="Nakai S."/>
            <person name="Noback M."/>
            <person name="Noone D."/>
            <person name="O'Reilly M."/>
            <person name="Ogawa K."/>
            <person name="Ogiwara A."/>
            <person name="Oudega B."/>
            <person name="Park S.-H."/>
            <person name="Parro V."/>
            <person name="Pohl T.M."/>
            <person name="Portetelle D."/>
            <person name="Porwollik S."/>
            <person name="Prescott A.M."/>
            <person name="Presecan E."/>
            <person name="Pujic P."/>
            <person name="Purnelle B."/>
            <person name="Rapoport G."/>
            <person name="Rey M."/>
            <person name="Reynolds S."/>
            <person name="Rieger M."/>
            <person name="Rivolta C."/>
            <person name="Rocha E."/>
            <person name="Roche B."/>
            <person name="Rose M."/>
            <person name="Sadaie Y."/>
            <person name="Sato T."/>
            <person name="Scanlan E."/>
            <person name="Schleich S."/>
            <person name="Schroeter R."/>
            <person name="Scoffone F."/>
            <person name="Sekiguchi J."/>
            <person name="Sekowska A."/>
            <person name="Seror S.J."/>
            <person name="Serror P."/>
            <person name="Shin B.-S."/>
            <person name="Soldo B."/>
            <person name="Sorokin A."/>
            <person name="Tacconi E."/>
            <person name="Takagi T."/>
            <person name="Takahashi H."/>
            <person name="Takemaru K."/>
            <person name="Takeuchi M."/>
            <person name="Tamakoshi A."/>
            <person name="Tanaka T."/>
            <person name="Terpstra P."/>
            <person name="Tognoni A."/>
            <person name="Tosato V."/>
            <person name="Uchiyama S."/>
            <person name="Vandenbol M."/>
            <person name="Vannier F."/>
            <person name="Vassarotti A."/>
            <person name="Viari A."/>
            <person name="Wambutt R."/>
            <person name="Wedler E."/>
            <person name="Wedler H."/>
            <person name="Weitzenegger T."/>
            <person name="Winters P."/>
            <person name="Wipat A."/>
            <person name="Yamamoto H."/>
            <person name="Yamane K."/>
            <person name="Yasumoto K."/>
            <person name="Yata K."/>
            <person name="Yoshida K."/>
            <person name="Yoshikawa H.-F."/>
            <person name="Zumstein E."/>
            <person name="Yoshikawa H."/>
            <person name="Danchin A."/>
        </authorList>
    </citation>
    <scope>NUCLEOTIDE SEQUENCE [LARGE SCALE GENOMIC DNA]</scope>
    <source>
        <strain>168</strain>
    </source>
</reference>
<reference key="4">
    <citation type="journal article" date="1986" name="J. Bacteriol.">
        <title>Gene for the alpha subunit of Bacillus subtilis RNA polymerase maps in the ribosomal protein gene cluster.</title>
        <authorList>
            <person name="Suh J.-W."/>
            <person name="Boylan S.A."/>
            <person name="Price C.W."/>
        </authorList>
    </citation>
    <scope>NUCLEOTIDE SEQUENCE [GENOMIC DNA] OF 1-65</scope>
</reference>
<reference key="5">
    <citation type="journal article" date="1982" name="J. Bacteriol.">
        <title>Interchangeability of delta subunits of RNA polymerase from different species of the genus Bacillus.</title>
        <authorList>
            <person name="Achberger E.C."/>
            <person name="Tahara M."/>
            <person name="Whiteley H.R."/>
        </authorList>
    </citation>
    <scope>SUBUNIT</scope>
    <source>
        <strain>168</strain>
    </source>
</reference>
<reference key="6">
    <citation type="journal article" date="2008" name="Protein Expr. Purif.">
        <title>Overproduction and purification of recombinant Bacillus subtilis RNA polymerase.</title>
        <authorList>
            <person name="Yang X."/>
            <person name="Lewis P.J."/>
        </authorList>
    </citation>
    <scope>FUNCTION</scope>
    <scope>SUBUNIT</scope>
    <source>
        <strain>BS200</strain>
    </source>
</reference>
<reference key="7">
    <citation type="journal article" date="2011" name="Proteomics">
        <title>The dynamic protein partnership of RNA polymerase in Bacillus subtilis.</title>
        <authorList>
            <person name="Delumeau O."/>
            <person name="Lecointe F."/>
            <person name="Muntel J."/>
            <person name="Guillot A."/>
            <person name="Guedon E."/>
            <person name="Monnet V."/>
            <person name="Hecker M."/>
            <person name="Becher D."/>
            <person name="Polard P."/>
            <person name="Noirot P."/>
        </authorList>
    </citation>
    <scope>SUBUNIT</scope>
    <source>
        <strain>168</strain>
    </source>
</reference>
<proteinExistence type="evidence at protein level"/>
<accession>P20429</accession>
<sequence length="314" mass="34799">MIEIEKPKIETVEISDDAKFGKFVVEPLERGYGTTLGNSLRRILLSSLPGAAVTSIQIDGVLHEFSTIEGVVEDVTTIILHIKKLALKIYSDEEKTLEIDVQGEGTVTAADITHDSDVEILNPDLHIATLGENASFRVRLTAQRGRGYTPADANKRDDQPIGVIPIDSIYTPVSRVSYQVENTRVGQVANYDKLTLDVWTDGSTGPKEAIALGSKILTEHLNIFVGLTDEAQHAEIMVEKEEDQKEKVLEMTIEELDLSVRSYNCLKRAGINTVQELANKTEEDMMKVRNLGRKSLEEVKAKLEELGLGLRKDD</sequence>
<comment type="function">
    <text evidence="2">DNA-dependent RNA polymerase catalyzes the transcription of DNA into RNA using the four ribonucleoside triphosphates as substrates.</text>
</comment>
<comment type="catalytic activity">
    <reaction evidence="1 4">
        <text>RNA(n) + a ribonucleoside 5'-triphosphate = RNA(n+1) + diphosphate</text>
        <dbReference type="Rhea" id="RHEA:21248"/>
        <dbReference type="Rhea" id="RHEA-COMP:14527"/>
        <dbReference type="Rhea" id="RHEA-COMP:17342"/>
        <dbReference type="ChEBI" id="CHEBI:33019"/>
        <dbReference type="ChEBI" id="CHEBI:61557"/>
        <dbReference type="ChEBI" id="CHEBI:140395"/>
        <dbReference type="EC" id="2.7.7.6"/>
    </reaction>
</comment>
<comment type="subunit">
    <text evidence="1 2 3 4">Homodimer. RNAP is composed of a core of 2 alpha, a beta and a beta' subunit. The core is associated with a delta subunit, and at least one of epsilon or omega (PubMed:18289874, PubMed:21710567, PubMed:6802805). When a sigma factor is associated with the core the holoenzyme is formed, which can initiate transcription (PubMed:18289874).</text>
</comment>
<comment type="interaction">
    <interactant intactId="EBI-5247865">
        <id>P20429</id>
    </interactant>
    <interactant intactId="EBI-5247535">
        <id>P25144</id>
        <label>ccpA</label>
    </interactant>
    <organismsDiffer>false</organismsDiffer>
    <experiments>5</experiments>
</comment>
<comment type="interaction">
    <interactant intactId="EBI-5247865">
        <id>P20429</id>
    </interactant>
    <interactant intactId="EBI-7827914">
        <id>P39779</id>
        <label>codY</label>
    </interactant>
    <organismsDiffer>false</organismsDiffer>
    <experiments>2</experiments>
</comment>
<comment type="domain">
    <text evidence="1">The N-terminal domain is essential for RNAP assembly and basal transcription, whereas the C-terminal domain is involved in interaction with transcriptional regulators and with upstream promoter elements.</text>
</comment>
<comment type="similarity">
    <text evidence="1">Belongs to the RNA polymerase alpha chain family.</text>
</comment>